<keyword id="KW-0028">Amino-acid biosynthesis</keyword>
<keyword id="KW-0963">Cytoplasm</keyword>
<keyword id="KW-0220">Diaminopimelate biosynthesis</keyword>
<keyword id="KW-0457">Lysine biosynthesis</keyword>
<keyword id="KW-0520">NAD</keyword>
<keyword id="KW-0521">NADP</keyword>
<keyword id="KW-0560">Oxidoreductase</keyword>
<evidence type="ECO:0000255" key="1">
    <source>
        <dbReference type="HAMAP-Rule" id="MF_00102"/>
    </source>
</evidence>
<evidence type="ECO:0000305" key="2"/>
<feature type="chain" id="PRO_1000189766" description="4-hydroxy-tetrahydrodipicolinate reductase">
    <location>
        <begin position="1"/>
        <end position="269"/>
    </location>
</feature>
<feature type="active site" description="Proton donor/acceptor" evidence="1">
    <location>
        <position position="155"/>
    </location>
</feature>
<feature type="active site" description="Proton donor" evidence="1">
    <location>
        <position position="159"/>
    </location>
</feature>
<feature type="binding site" evidence="1">
    <location>
        <begin position="8"/>
        <end position="13"/>
    </location>
    <ligand>
        <name>NAD(+)</name>
        <dbReference type="ChEBI" id="CHEBI:57540"/>
    </ligand>
</feature>
<feature type="binding site" evidence="1">
    <location>
        <position position="34"/>
    </location>
    <ligand>
        <name>NAD(+)</name>
        <dbReference type="ChEBI" id="CHEBI:57540"/>
    </ligand>
</feature>
<feature type="binding site" evidence="1">
    <location>
        <position position="35"/>
    </location>
    <ligand>
        <name>NADP(+)</name>
        <dbReference type="ChEBI" id="CHEBI:58349"/>
    </ligand>
</feature>
<feature type="binding site" evidence="1">
    <location>
        <begin position="98"/>
        <end position="100"/>
    </location>
    <ligand>
        <name>NAD(+)</name>
        <dbReference type="ChEBI" id="CHEBI:57540"/>
    </ligand>
</feature>
<feature type="binding site" evidence="1">
    <location>
        <begin position="122"/>
        <end position="125"/>
    </location>
    <ligand>
        <name>NAD(+)</name>
        <dbReference type="ChEBI" id="CHEBI:57540"/>
    </ligand>
</feature>
<feature type="binding site" evidence="1">
    <location>
        <position position="156"/>
    </location>
    <ligand>
        <name>(S)-2,3,4,5-tetrahydrodipicolinate</name>
        <dbReference type="ChEBI" id="CHEBI:16845"/>
    </ligand>
</feature>
<feature type="binding site" evidence="1">
    <location>
        <begin position="165"/>
        <end position="166"/>
    </location>
    <ligand>
        <name>(S)-2,3,4,5-tetrahydrodipicolinate</name>
        <dbReference type="ChEBI" id="CHEBI:16845"/>
    </ligand>
</feature>
<comment type="function">
    <text evidence="1">Catalyzes the conversion of 4-hydroxy-tetrahydrodipicolinate (HTPA) to tetrahydrodipicolinate.</text>
</comment>
<comment type="catalytic activity">
    <reaction evidence="1">
        <text>(S)-2,3,4,5-tetrahydrodipicolinate + NAD(+) + H2O = (2S,4S)-4-hydroxy-2,3,4,5-tetrahydrodipicolinate + NADH + H(+)</text>
        <dbReference type="Rhea" id="RHEA:35323"/>
        <dbReference type="ChEBI" id="CHEBI:15377"/>
        <dbReference type="ChEBI" id="CHEBI:15378"/>
        <dbReference type="ChEBI" id="CHEBI:16845"/>
        <dbReference type="ChEBI" id="CHEBI:57540"/>
        <dbReference type="ChEBI" id="CHEBI:57945"/>
        <dbReference type="ChEBI" id="CHEBI:67139"/>
        <dbReference type="EC" id="1.17.1.8"/>
    </reaction>
</comment>
<comment type="catalytic activity">
    <reaction evidence="1">
        <text>(S)-2,3,4,5-tetrahydrodipicolinate + NADP(+) + H2O = (2S,4S)-4-hydroxy-2,3,4,5-tetrahydrodipicolinate + NADPH + H(+)</text>
        <dbReference type="Rhea" id="RHEA:35331"/>
        <dbReference type="ChEBI" id="CHEBI:15377"/>
        <dbReference type="ChEBI" id="CHEBI:15378"/>
        <dbReference type="ChEBI" id="CHEBI:16845"/>
        <dbReference type="ChEBI" id="CHEBI:57783"/>
        <dbReference type="ChEBI" id="CHEBI:58349"/>
        <dbReference type="ChEBI" id="CHEBI:67139"/>
        <dbReference type="EC" id="1.17.1.8"/>
    </reaction>
</comment>
<comment type="pathway">
    <text evidence="1">Amino-acid biosynthesis; L-lysine biosynthesis via DAP pathway; (S)-tetrahydrodipicolinate from L-aspartate: step 4/4.</text>
</comment>
<comment type="subcellular location">
    <subcellularLocation>
        <location evidence="1">Cytoplasm</location>
    </subcellularLocation>
</comment>
<comment type="similarity">
    <text evidence="1">Belongs to the DapB family.</text>
</comment>
<comment type="caution">
    <text evidence="2">Was originally thought to be a dihydrodipicolinate reductase (DHDPR), catalyzing the conversion of dihydrodipicolinate to tetrahydrodipicolinate. However, it was shown in E.coli that the substrate of the enzymatic reaction is not dihydrodipicolinate (DHDP) but in fact (2S,4S)-4-hydroxy-2,3,4,5-tetrahydrodipicolinic acid (HTPA), the product released by the DapA-catalyzed reaction.</text>
</comment>
<accession>B7VJ13</accession>
<organism>
    <name type="scientific">Vibrio atlanticus (strain LGP32)</name>
    <name type="common">Vibrio splendidus (strain Mel32)</name>
    <dbReference type="NCBI Taxonomy" id="575788"/>
    <lineage>
        <taxon>Bacteria</taxon>
        <taxon>Pseudomonadati</taxon>
        <taxon>Pseudomonadota</taxon>
        <taxon>Gammaproteobacteria</taxon>
        <taxon>Vibrionales</taxon>
        <taxon>Vibrionaceae</taxon>
        <taxon>Vibrio</taxon>
    </lineage>
</organism>
<proteinExistence type="inferred from homology"/>
<protein>
    <recommendedName>
        <fullName evidence="1">4-hydroxy-tetrahydrodipicolinate reductase</fullName>
        <shortName evidence="1">HTPA reductase</shortName>
        <ecNumber evidence="1">1.17.1.8</ecNumber>
    </recommendedName>
</protein>
<reference key="1">
    <citation type="submission" date="2009-02" db="EMBL/GenBank/DDBJ databases">
        <title>Vibrio splendidus str. LGP32 complete genome.</title>
        <authorList>
            <person name="Mazel D."/>
            <person name="Le Roux F."/>
        </authorList>
    </citation>
    <scope>NUCLEOTIDE SEQUENCE [LARGE SCALE GENOMIC DNA]</scope>
    <source>
        <strain>LGP32</strain>
    </source>
</reference>
<dbReference type="EC" id="1.17.1.8" evidence="1"/>
<dbReference type="EMBL" id="FM954972">
    <property type="protein sequence ID" value="CAV17467.1"/>
    <property type="molecule type" value="Genomic_DNA"/>
</dbReference>
<dbReference type="SMR" id="B7VJ13"/>
<dbReference type="STRING" id="575788.VS_0460"/>
<dbReference type="KEGG" id="vsp:VS_0460"/>
<dbReference type="PATRIC" id="fig|575788.5.peg.1827"/>
<dbReference type="eggNOG" id="COG0289">
    <property type="taxonomic scope" value="Bacteria"/>
</dbReference>
<dbReference type="HOGENOM" id="CLU_047479_2_1_6"/>
<dbReference type="UniPathway" id="UPA00034">
    <property type="reaction ID" value="UER00018"/>
</dbReference>
<dbReference type="Proteomes" id="UP000009100">
    <property type="component" value="Chromosome 1"/>
</dbReference>
<dbReference type="GO" id="GO:0005829">
    <property type="term" value="C:cytosol"/>
    <property type="evidence" value="ECO:0007669"/>
    <property type="project" value="TreeGrafter"/>
</dbReference>
<dbReference type="GO" id="GO:0008839">
    <property type="term" value="F:4-hydroxy-tetrahydrodipicolinate reductase"/>
    <property type="evidence" value="ECO:0007669"/>
    <property type="project" value="UniProtKB-EC"/>
</dbReference>
<dbReference type="GO" id="GO:0051287">
    <property type="term" value="F:NAD binding"/>
    <property type="evidence" value="ECO:0007669"/>
    <property type="project" value="UniProtKB-UniRule"/>
</dbReference>
<dbReference type="GO" id="GO:0050661">
    <property type="term" value="F:NADP binding"/>
    <property type="evidence" value="ECO:0007669"/>
    <property type="project" value="UniProtKB-UniRule"/>
</dbReference>
<dbReference type="GO" id="GO:0016726">
    <property type="term" value="F:oxidoreductase activity, acting on CH or CH2 groups, NAD or NADP as acceptor"/>
    <property type="evidence" value="ECO:0007669"/>
    <property type="project" value="UniProtKB-UniRule"/>
</dbReference>
<dbReference type="GO" id="GO:0019877">
    <property type="term" value="P:diaminopimelate biosynthetic process"/>
    <property type="evidence" value="ECO:0007669"/>
    <property type="project" value="UniProtKB-UniRule"/>
</dbReference>
<dbReference type="GO" id="GO:0009089">
    <property type="term" value="P:lysine biosynthetic process via diaminopimelate"/>
    <property type="evidence" value="ECO:0007669"/>
    <property type="project" value="UniProtKB-UniRule"/>
</dbReference>
<dbReference type="CDD" id="cd02274">
    <property type="entry name" value="DHDPR_N"/>
    <property type="match status" value="1"/>
</dbReference>
<dbReference type="FunFam" id="3.30.360.10:FF:000004">
    <property type="entry name" value="4-hydroxy-tetrahydrodipicolinate reductase"/>
    <property type="match status" value="1"/>
</dbReference>
<dbReference type="FunFam" id="3.40.50.720:FF:000048">
    <property type="entry name" value="4-hydroxy-tetrahydrodipicolinate reductase"/>
    <property type="match status" value="1"/>
</dbReference>
<dbReference type="Gene3D" id="3.30.360.10">
    <property type="entry name" value="Dihydrodipicolinate Reductase, domain 2"/>
    <property type="match status" value="1"/>
</dbReference>
<dbReference type="Gene3D" id="3.40.50.720">
    <property type="entry name" value="NAD(P)-binding Rossmann-like Domain"/>
    <property type="match status" value="1"/>
</dbReference>
<dbReference type="HAMAP" id="MF_00102">
    <property type="entry name" value="DapB"/>
    <property type="match status" value="1"/>
</dbReference>
<dbReference type="InterPro" id="IPR022663">
    <property type="entry name" value="DapB_C"/>
</dbReference>
<dbReference type="InterPro" id="IPR000846">
    <property type="entry name" value="DapB_N"/>
</dbReference>
<dbReference type="InterPro" id="IPR022664">
    <property type="entry name" value="DapB_N_CS"/>
</dbReference>
<dbReference type="InterPro" id="IPR023940">
    <property type="entry name" value="DHDPR_bac"/>
</dbReference>
<dbReference type="InterPro" id="IPR036291">
    <property type="entry name" value="NAD(P)-bd_dom_sf"/>
</dbReference>
<dbReference type="NCBIfam" id="TIGR00036">
    <property type="entry name" value="dapB"/>
    <property type="match status" value="1"/>
</dbReference>
<dbReference type="PANTHER" id="PTHR20836:SF0">
    <property type="entry name" value="4-HYDROXY-TETRAHYDRODIPICOLINATE REDUCTASE 1, CHLOROPLASTIC-RELATED"/>
    <property type="match status" value="1"/>
</dbReference>
<dbReference type="PANTHER" id="PTHR20836">
    <property type="entry name" value="DIHYDRODIPICOLINATE REDUCTASE"/>
    <property type="match status" value="1"/>
</dbReference>
<dbReference type="Pfam" id="PF05173">
    <property type="entry name" value="DapB_C"/>
    <property type="match status" value="1"/>
</dbReference>
<dbReference type="Pfam" id="PF01113">
    <property type="entry name" value="DapB_N"/>
    <property type="match status" value="1"/>
</dbReference>
<dbReference type="PIRSF" id="PIRSF000161">
    <property type="entry name" value="DHPR"/>
    <property type="match status" value="1"/>
</dbReference>
<dbReference type="SUPFAM" id="SSF55347">
    <property type="entry name" value="Glyceraldehyde-3-phosphate dehydrogenase-like, C-terminal domain"/>
    <property type="match status" value="1"/>
</dbReference>
<dbReference type="SUPFAM" id="SSF51735">
    <property type="entry name" value="NAD(P)-binding Rossmann-fold domains"/>
    <property type="match status" value="1"/>
</dbReference>
<dbReference type="PROSITE" id="PS01298">
    <property type="entry name" value="DAPB"/>
    <property type="match status" value="1"/>
</dbReference>
<gene>
    <name evidence="1" type="primary">dapB</name>
    <name type="ordered locus">VS_0460</name>
</gene>
<name>DAPB_VIBA3</name>
<sequence>MVRIAIAGAAGRMGRNLVKAAHHNSEASVGAGSERPESSLVGVDVGELCGEGRFDVALVDDLSKAVEEFDVIVDFTAPVSTLANIELCKRHGKKLIIGTTGFSEEEKLVIDAASKEMAIVMAPNYSVGVNLVFKLLEKAAKVMGDYCDVEIVEAHHRHKVDAPSGTAIGMGEAIAGAMGNELNDVAVWSREGITGERTKDEIGFATIRAGDIIGEHTAMFADIGERVEITHKATDRMTFANGAIKAAVWLNDKPAGFYTMTDVLGLNDL</sequence>